<dbReference type="EMBL" id="CH476599">
    <property type="protein sequence ID" value="EAU34717.1"/>
    <property type="molecule type" value="Genomic_DNA"/>
</dbReference>
<dbReference type="RefSeq" id="XP_001213448.1">
    <property type="nucleotide sequence ID" value="XM_001213448.1"/>
</dbReference>
<dbReference type="SMR" id="Q0CPW4"/>
<dbReference type="STRING" id="341663.Q0CPW4"/>
<dbReference type="EnsemblFungi" id="EAU34717">
    <property type="protein sequence ID" value="EAU34717"/>
    <property type="gene ID" value="ATEG_04270"/>
</dbReference>
<dbReference type="GeneID" id="4320329"/>
<dbReference type="eggNOG" id="KOG0998">
    <property type="taxonomic scope" value="Eukaryota"/>
</dbReference>
<dbReference type="eggNOG" id="KOG4392">
    <property type="taxonomic scope" value="Eukaryota"/>
</dbReference>
<dbReference type="OrthoDB" id="2015333at2759"/>
<dbReference type="Proteomes" id="UP000007963">
    <property type="component" value="Unassembled WGS sequence"/>
</dbReference>
<dbReference type="GO" id="GO:0030479">
    <property type="term" value="C:actin cortical patch"/>
    <property type="evidence" value="ECO:0007669"/>
    <property type="project" value="UniProtKB-SubCell"/>
</dbReference>
<dbReference type="GO" id="GO:0010008">
    <property type="term" value="C:endosome membrane"/>
    <property type="evidence" value="ECO:0007669"/>
    <property type="project" value="UniProtKB-SubCell"/>
</dbReference>
<dbReference type="GO" id="GO:0005886">
    <property type="term" value="C:plasma membrane"/>
    <property type="evidence" value="ECO:0007669"/>
    <property type="project" value="UniProtKB-SubCell"/>
</dbReference>
<dbReference type="GO" id="GO:0003779">
    <property type="term" value="F:actin binding"/>
    <property type="evidence" value="ECO:0007669"/>
    <property type="project" value="UniProtKB-KW"/>
</dbReference>
<dbReference type="GO" id="GO:0005509">
    <property type="term" value="F:calcium ion binding"/>
    <property type="evidence" value="ECO:0007669"/>
    <property type="project" value="InterPro"/>
</dbReference>
<dbReference type="GO" id="GO:0006897">
    <property type="term" value="P:endocytosis"/>
    <property type="evidence" value="ECO:0007669"/>
    <property type="project" value="UniProtKB-KW"/>
</dbReference>
<dbReference type="GO" id="GO:0016197">
    <property type="term" value="P:endosomal transport"/>
    <property type="evidence" value="ECO:0007669"/>
    <property type="project" value="TreeGrafter"/>
</dbReference>
<dbReference type="CDD" id="cd00052">
    <property type="entry name" value="EH"/>
    <property type="match status" value="2"/>
</dbReference>
<dbReference type="FunFam" id="1.10.238.10:FF:000349">
    <property type="entry name" value="Actin cytoskeleton-regulatory complex protein PAN1"/>
    <property type="match status" value="1"/>
</dbReference>
<dbReference type="Gene3D" id="1.10.238.10">
    <property type="entry name" value="EF-hand"/>
    <property type="match status" value="2"/>
</dbReference>
<dbReference type="InterPro" id="IPR013182">
    <property type="entry name" value="DUF1720"/>
</dbReference>
<dbReference type="InterPro" id="IPR011992">
    <property type="entry name" value="EF-hand-dom_pair"/>
</dbReference>
<dbReference type="InterPro" id="IPR002048">
    <property type="entry name" value="EF_hand_dom"/>
</dbReference>
<dbReference type="InterPro" id="IPR000261">
    <property type="entry name" value="EH_dom"/>
</dbReference>
<dbReference type="InterPro" id="IPR003124">
    <property type="entry name" value="WH2_dom"/>
</dbReference>
<dbReference type="PANTHER" id="PTHR11216:SF170">
    <property type="entry name" value="DYNAMIN ASSOCIATED PROTEIN 160, ISOFORM D"/>
    <property type="match status" value="1"/>
</dbReference>
<dbReference type="PANTHER" id="PTHR11216">
    <property type="entry name" value="EH DOMAIN"/>
    <property type="match status" value="1"/>
</dbReference>
<dbReference type="Pfam" id="PF08226">
    <property type="entry name" value="DUF1720"/>
    <property type="match status" value="3"/>
</dbReference>
<dbReference type="Pfam" id="PF12763">
    <property type="entry name" value="EH"/>
    <property type="match status" value="2"/>
</dbReference>
<dbReference type="Pfam" id="PF02205">
    <property type="entry name" value="WH2"/>
    <property type="match status" value="1"/>
</dbReference>
<dbReference type="SMART" id="SM00054">
    <property type="entry name" value="EFh"/>
    <property type="match status" value="2"/>
</dbReference>
<dbReference type="SMART" id="SM00027">
    <property type="entry name" value="EH"/>
    <property type="match status" value="2"/>
</dbReference>
<dbReference type="SUPFAM" id="SSF47473">
    <property type="entry name" value="EF-hand"/>
    <property type="match status" value="2"/>
</dbReference>
<dbReference type="PROSITE" id="PS50222">
    <property type="entry name" value="EF_HAND_2"/>
    <property type="match status" value="2"/>
</dbReference>
<dbReference type="PROSITE" id="PS50031">
    <property type="entry name" value="EH"/>
    <property type="match status" value="2"/>
</dbReference>
<dbReference type="PROSITE" id="PS51082">
    <property type="entry name" value="WH2"/>
    <property type="match status" value="1"/>
</dbReference>
<name>PAN1_ASPTN</name>
<accession>Q0CPW4</accession>
<reference key="1">
    <citation type="submission" date="2005-09" db="EMBL/GenBank/DDBJ databases">
        <title>Annotation of the Aspergillus terreus NIH2624 genome.</title>
        <authorList>
            <person name="Birren B.W."/>
            <person name="Lander E.S."/>
            <person name="Galagan J.E."/>
            <person name="Nusbaum C."/>
            <person name="Devon K."/>
            <person name="Henn M."/>
            <person name="Ma L.-J."/>
            <person name="Jaffe D.B."/>
            <person name="Butler J."/>
            <person name="Alvarez P."/>
            <person name="Gnerre S."/>
            <person name="Grabherr M."/>
            <person name="Kleber M."/>
            <person name="Mauceli E.W."/>
            <person name="Brockman W."/>
            <person name="Rounsley S."/>
            <person name="Young S.K."/>
            <person name="LaButti K."/>
            <person name="Pushparaj V."/>
            <person name="DeCaprio D."/>
            <person name="Crawford M."/>
            <person name="Koehrsen M."/>
            <person name="Engels R."/>
            <person name="Montgomery P."/>
            <person name="Pearson M."/>
            <person name="Howarth C."/>
            <person name="Larson L."/>
            <person name="Luoma S."/>
            <person name="White J."/>
            <person name="Alvarado L."/>
            <person name="Kodira C.D."/>
            <person name="Zeng Q."/>
            <person name="Oleary S."/>
            <person name="Yandava C."/>
            <person name="Denning D.W."/>
            <person name="Nierman W.C."/>
            <person name="Milne T."/>
            <person name="Madden K."/>
        </authorList>
    </citation>
    <scope>NUCLEOTIDE SEQUENCE [LARGE SCALE GENOMIC DNA]</scope>
    <source>
        <strain>NIH 2624 / FGSC A1156</strain>
    </source>
</reference>
<proteinExistence type="inferred from homology"/>
<sequence>MYSSSNSFLGGANSARPGQQPPFMQQQQQPSYSQFPPGQQQQPQPTGFAPQPTGYAQPQLSSFGSQLQPQPTGFPSGQLQPQFTGFPGAAPQQSQQPQPTGFQPQQPQFTGYPPQSQPPQLQVPAATGLPLRPAQTSSEIANSFRDASGAAPPPPPKSSGSKIPNIRLSFITAQDQAKFEQLFKSAVGDSQTMSGDKARELLLRSRLSGSDLSKIWVLSDSTKSGQLFFPEFALAMYLCNLRLTGRDLPDALPETIKNEVSSMVDIISFQVPDTQPEPVVRTNVPNFDAPLMENKLAPPAPQQPQPQQPTNSQLLNQLTAQPTGFLSQPTGLSPNQAPFGQQSNLAPQPTGLPGQPQQQSLQPQPTGFMSNPQPTGYSGPRPPVPPIPTGYASNLSPSQTGGMSGLVAQPTGIPGQWGFVNAPSSGLPNIEALKQQLMPQPGREGGFSTAGLAGNASIPWAITKEEKKIYDDLFRAWDGFRKGFIGGDTAIEIMGQSGLNRQDLERIWTLADPNNRGRLNMDEFAVAMHLIYRKLNGYPVPNRLPPELIPPSTRNLNDSIGTIKSLLSQDAESRKATGAFLQPQKTGVSYLKEHSFRGGAVSPGVGRKDATLFKNDDQAAAGYRSSARRRVGNNGRTPSPAASSQASEDELSVEQLKKKIRETQIMLDAVDFQDETRAEEDDALDRRDRREAESLMDRIRRVQDEIDTHPNAAFRNLDNGAERRSLRRQLQAYEDQVPQVASEVRRVEREIAEARLELFRLKDAKAHPNSALNIVGTGPGGTVTEADRIKARARARMQARAAELAGRPAPATQDDEGAAARRLESESANVKADREKNDAMTRDVEDSVKDFARSLEDSLKDVSENSTREHEKRRWEDALGVEDVIRDFIYDLKRNSRTAHIRKEEASRASPSQSQQSRYDEPPAVRPSPPPSTGSTGSLPGTTHEDRVAAAKERAQKRIAERLAAAGLKPHSEASETLVQRQEREKREREERLKRAEEEDALREQERQRRLAEERGTPAQPSTKPIGKKPPPAPPSRRARTDSADQSEAKKAADEAAKVEQTAREQAIREEQQVQEEETKRLEDEARQREEEFMKEKEAQEARLRALQEQVQQGKIKKQEEKRRKEEAERRAKEQEAKLAAQRAELEAAKERERQLQRELEAMEEESSSDDEGPEFATPRNGSPAQTEAPTAEAPPPPPPAPATAPPVPAIAEPEAPTSPATSPASSRANLSPEAESKNPWFKKIGQPADSQPAPVPQAATTPSDTHSTNPFHRLAQQQESTAPAFTGSAPLERKTRARPEDDDDWSAAGSEFDSSDDEDDRAGGGSAKQLASILFGTMAPPRPLSAMDDKSPSKTPTPVQETPAPAPEADAAPSAPVAAPPPPPPPPVPAAAPNGSAGAPPPPPPPPAPPMAPPPPPAGVPPPPAPPAAPAGAADRGALLASIQAGKGLRKVQTNDRSTSSTAGRVLD</sequence>
<gene>
    <name type="primary">pan1</name>
    <name type="ORF">ATEG_04270</name>
</gene>
<comment type="function">
    <text evidence="1">Component of the PAN1 actin cytoskeleton-regulatory complex required for the internalization of endosomes during actin-coupled endocytosis. The complex links the site of endocytosis to the cell membrane-associated actin cytoskeleton. Mediates uptake of external molecules and vacuolar degradation of plasma membrane proteins. Plays a role in the proper organization of the cell membrane-associated actin cytoskeleton and promotes its destabilization (By similarity).</text>
</comment>
<comment type="subunit">
    <text evidence="1">Component of the PAN1 actin cytoskeleton-regulatory complex.</text>
</comment>
<comment type="subcellular location">
    <subcellularLocation>
        <location evidence="1">Cell membrane</location>
        <topology evidence="1">Peripheral membrane protein</topology>
        <orientation evidence="1">Cytoplasmic side</orientation>
    </subcellularLocation>
    <subcellularLocation>
        <location evidence="1">Endosome membrane</location>
        <topology evidence="1">Peripheral membrane protein</topology>
        <orientation evidence="1">Cytoplasmic side</orientation>
    </subcellularLocation>
    <subcellularLocation>
        <location evidence="1">Cytoplasm</location>
        <location evidence="1">Cytoskeleton</location>
        <location evidence="1">Actin patch</location>
    </subcellularLocation>
    <text evidence="1">Cytoplasmic and cortical actin patches.</text>
</comment>
<comment type="similarity">
    <text evidence="7">Belongs to the PAN1 family.</text>
</comment>
<protein>
    <recommendedName>
        <fullName>Actin cytoskeleton-regulatory complex protein pan1</fullName>
    </recommendedName>
</protein>
<feature type="chain" id="PRO_0000349469" description="Actin cytoskeleton-regulatory complex protein pan1">
    <location>
        <begin position="1"/>
        <end position="1469"/>
    </location>
</feature>
<feature type="domain" description="EH 1" evidence="3">
    <location>
        <begin position="175"/>
        <end position="263"/>
    </location>
</feature>
<feature type="domain" description="EF-hand 1" evidence="5">
    <location>
        <begin position="207"/>
        <end position="242"/>
    </location>
</feature>
<feature type="domain" description="EH 2" evidence="3">
    <location>
        <begin position="466"/>
        <end position="555"/>
    </location>
</feature>
<feature type="domain" description="EF-hand 2" evidence="5">
    <location>
        <begin position="499"/>
        <end position="534"/>
    </location>
</feature>
<feature type="domain" description="WH2" evidence="4">
    <location>
        <begin position="1436"/>
        <end position="1453"/>
    </location>
</feature>
<feature type="region of interest" description="Disordered" evidence="6">
    <location>
        <begin position="1"/>
        <end position="163"/>
    </location>
</feature>
<feature type="region of interest" description="Disordered" evidence="6">
    <location>
        <begin position="276"/>
        <end position="311"/>
    </location>
</feature>
<feature type="region of interest" description="Disordered" evidence="6">
    <location>
        <begin position="323"/>
        <end position="409"/>
    </location>
</feature>
<feature type="region of interest" description="Disordered" evidence="6">
    <location>
        <begin position="619"/>
        <end position="650"/>
    </location>
</feature>
<feature type="region of interest" description="Disordered" evidence="6">
    <location>
        <begin position="801"/>
        <end position="845"/>
    </location>
</feature>
<feature type="region of interest" description="Disordered" evidence="6">
    <location>
        <begin position="898"/>
        <end position="1469"/>
    </location>
</feature>
<feature type="coiled-coil region" evidence="2">
    <location>
        <begin position="641"/>
        <end position="767"/>
    </location>
</feature>
<feature type="coiled-coil region" evidence="2">
    <location>
        <begin position="973"/>
        <end position="1172"/>
    </location>
</feature>
<feature type="compositionally biased region" description="Low complexity" evidence="6">
    <location>
        <begin position="17"/>
        <end position="52"/>
    </location>
</feature>
<feature type="compositionally biased region" description="Polar residues" evidence="6">
    <location>
        <begin position="54"/>
        <end position="83"/>
    </location>
</feature>
<feature type="compositionally biased region" description="Low complexity" evidence="6">
    <location>
        <begin position="85"/>
        <end position="124"/>
    </location>
</feature>
<feature type="compositionally biased region" description="Pro residues" evidence="6">
    <location>
        <begin position="298"/>
        <end position="307"/>
    </location>
</feature>
<feature type="compositionally biased region" description="Polar residues" evidence="6">
    <location>
        <begin position="323"/>
        <end position="346"/>
    </location>
</feature>
<feature type="compositionally biased region" description="Low complexity" evidence="6">
    <location>
        <begin position="347"/>
        <end position="366"/>
    </location>
</feature>
<feature type="compositionally biased region" description="Polar residues" evidence="6">
    <location>
        <begin position="391"/>
        <end position="401"/>
    </location>
</feature>
<feature type="compositionally biased region" description="Polar residues" evidence="6">
    <location>
        <begin position="634"/>
        <end position="646"/>
    </location>
</feature>
<feature type="compositionally biased region" description="Basic and acidic residues" evidence="6">
    <location>
        <begin position="818"/>
        <end position="845"/>
    </location>
</feature>
<feature type="compositionally biased region" description="Low complexity" evidence="6">
    <location>
        <begin position="908"/>
        <end position="917"/>
    </location>
</feature>
<feature type="compositionally biased region" description="Low complexity" evidence="6">
    <location>
        <begin position="933"/>
        <end position="942"/>
    </location>
</feature>
<feature type="compositionally biased region" description="Basic and acidic residues" evidence="6">
    <location>
        <begin position="943"/>
        <end position="961"/>
    </location>
</feature>
<feature type="compositionally biased region" description="Basic and acidic residues" evidence="6">
    <location>
        <begin position="981"/>
        <end position="1016"/>
    </location>
</feature>
<feature type="compositionally biased region" description="Basic and acidic residues" evidence="6">
    <location>
        <begin position="1039"/>
        <end position="1106"/>
    </location>
</feature>
<feature type="compositionally biased region" description="Basic and acidic residues" evidence="6">
    <location>
        <begin position="1117"/>
        <end position="1137"/>
    </location>
</feature>
<feature type="compositionally biased region" description="Basic and acidic residues" evidence="6">
    <location>
        <begin position="1144"/>
        <end position="1161"/>
    </location>
</feature>
<feature type="compositionally biased region" description="Acidic residues" evidence="6">
    <location>
        <begin position="1162"/>
        <end position="1174"/>
    </location>
</feature>
<feature type="compositionally biased region" description="Pro residues" evidence="6">
    <location>
        <begin position="1193"/>
        <end position="1209"/>
    </location>
</feature>
<feature type="compositionally biased region" description="Low complexity" evidence="6">
    <location>
        <begin position="1210"/>
        <end position="1227"/>
    </location>
</feature>
<feature type="compositionally biased region" description="Polar residues" evidence="6">
    <location>
        <begin position="1264"/>
        <end position="1284"/>
    </location>
</feature>
<feature type="compositionally biased region" description="Low complexity" evidence="6">
    <location>
        <begin position="1368"/>
        <end position="1378"/>
    </location>
</feature>
<feature type="compositionally biased region" description="Pro residues" evidence="6">
    <location>
        <begin position="1379"/>
        <end position="1391"/>
    </location>
</feature>
<feature type="compositionally biased region" description="Pro residues" evidence="6">
    <location>
        <begin position="1400"/>
        <end position="1430"/>
    </location>
</feature>
<feature type="compositionally biased region" description="Polar residues" evidence="6">
    <location>
        <begin position="1456"/>
        <end position="1469"/>
    </location>
</feature>
<evidence type="ECO:0000250" key="1"/>
<evidence type="ECO:0000255" key="2"/>
<evidence type="ECO:0000255" key="3">
    <source>
        <dbReference type="PROSITE-ProRule" id="PRU00077"/>
    </source>
</evidence>
<evidence type="ECO:0000255" key="4">
    <source>
        <dbReference type="PROSITE-ProRule" id="PRU00406"/>
    </source>
</evidence>
<evidence type="ECO:0000255" key="5">
    <source>
        <dbReference type="PROSITE-ProRule" id="PRU00448"/>
    </source>
</evidence>
<evidence type="ECO:0000256" key="6">
    <source>
        <dbReference type="SAM" id="MobiDB-lite"/>
    </source>
</evidence>
<evidence type="ECO:0000305" key="7"/>
<organism>
    <name type="scientific">Aspergillus terreus (strain NIH 2624 / FGSC A1156)</name>
    <dbReference type="NCBI Taxonomy" id="341663"/>
    <lineage>
        <taxon>Eukaryota</taxon>
        <taxon>Fungi</taxon>
        <taxon>Dikarya</taxon>
        <taxon>Ascomycota</taxon>
        <taxon>Pezizomycotina</taxon>
        <taxon>Eurotiomycetes</taxon>
        <taxon>Eurotiomycetidae</taxon>
        <taxon>Eurotiales</taxon>
        <taxon>Aspergillaceae</taxon>
        <taxon>Aspergillus</taxon>
        <taxon>Aspergillus subgen. Circumdati</taxon>
    </lineage>
</organism>
<keyword id="KW-0009">Actin-binding</keyword>
<keyword id="KW-1003">Cell membrane</keyword>
<keyword id="KW-0175">Coiled coil</keyword>
<keyword id="KW-0963">Cytoplasm</keyword>
<keyword id="KW-0206">Cytoskeleton</keyword>
<keyword id="KW-0254">Endocytosis</keyword>
<keyword id="KW-0967">Endosome</keyword>
<keyword id="KW-0472">Membrane</keyword>
<keyword id="KW-1185">Reference proteome</keyword>
<keyword id="KW-0677">Repeat</keyword>